<protein>
    <recommendedName>
        <fullName>Protein SDS24</fullName>
    </recommendedName>
</protein>
<dbReference type="EMBL" id="Z36083">
    <property type="protein sequence ID" value="CAA85178.1"/>
    <property type="molecule type" value="Genomic_DNA"/>
</dbReference>
<dbReference type="EMBL" id="BK006936">
    <property type="protein sequence ID" value="DAA07330.1"/>
    <property type="molecule type" value="Genomic_DNA"/>
</dbReference>
<dbReference type="PIR" id="S46088">
    <property type="entry name" value="S46088"/>
</dbReference>
<dbReference type="RefSeq" id="NP_009773.1">
    <property type="nucleotide sequence ID" value="NM_001178562.1"/>
</dbReference>
<dbReference type="SMR" id="P38314"/>
<dbReference type="BioGRID" id="32911">
    <property type="interactions" value="88"/>
</dbReference>
<dbReference type="DIP" id="DIP-2542N"/>
<dbReference type="FunCoup" id="P38314">
    <property type="interactions" value="290"/>
</dbReference>
<dbReference type="IntAct" id="P38314">
    <property type="interactions" value="17"/>
</dbReference>
<dbReference type="MINT" id="P38314"/>
<dbReference type="STRING" id="4932.YBR214W"/>
<dbReference type="GlyGen" id="P38314">
    <property type="glycosylation" value="2 sites, 1 O-linked glycan (1 site)"/>
</dbReference>
<dbReference type="iPTMnet" id="P38314"/>
<dbReference type="PaxDb" id="4932-YBR214W"/>
<dbReference type="PeptideAtlas" id="P38314"/>
<dbReference type="EnsemblFungi" id="YBR214W_mRNA">
    <property type="protein sequence ID" value="YBR214W"/>
    <property type="gene ID" value="YBR214W"/>
</dbReference>
<dbReference type="GeneID" id="852515"/>
<dbReference type="KEGG" id="sce:YBR214W"/>
<dbReference type="AGR" id="SGD:S000000418"/>
<dbReference type="SGD" id="S000000418">
    <property type="gene designation" value="SDS24"/>
</dbReference>
<dbReference type="VEuPathDB" id="FungiDB:YBR214W"/>
<dbReference type="eggNOG" id="KOG1764">
    <property type="taxonomic scope" value="Eukaryota"/>
</dbReference>
<dbReference type="GeneTree" id="ENSGT00950000183019"/>
<dbReference type="HOGENOM" id="CLU_024459_1_1_1"/>
<dbReference type="InParanoid" id="P38314"/>
<dbReference type="OMA" id="DWTQISI"/>
<dbReference type="OrthoDB" id="449052at2759"/>
<dbReference type="BioCyc" id="YEAST:G3O-29151-MONOMER"/>
<dbReference type="BioGRID-ORCS" id="852515">
    <property type="hits" value="10 hits in 10 CRISPR screens"/>
</dbReference>
<dbReference type="PRO" id="PR:P38314"/>
<dbReference type="Proteomes" id="UP000002311">
    <property type="component" value="Chromosome II"/>
</dbReference>
<dbReference type="RNAct" id="P38314">
    <property type="molecule type" value="protein"/>
</dbReference>
<dbReference type="GO" id="GO:0005737">
    <property type="term" value="C:cytoplasm"/>
    <property type="evidence" value="ECO:0007005"/>
    <property type="project" value="SGD"/>
</dbReference>
<dbReference type="GO" id="GO:0005829">
    <property type="term" value="C:cytosol"/>
    <property type="evidence" value="ECO:0007005"/>
    <property type="project" value="SGD"/>
</dbReference>
<dbReference type="GO" id="GO:0004865">
    <property type="term" value="F:protein serine/threonine phosphatase inhibitor activity"/>
    <property type="evidence" value="ECO:0000318"/>
    <property type="project" value="GO_Central"/>
</dbReference>
<dbReference type="GO" id="GO:0042149">
    <property type="term" value="P:cellular response to glucose starvation"/>
    <property type="evidence" value="ECO:0000318"/>
    <property type="project" value="GO_Central"/>
</dbReference>
<dbReference type="GO" id="GO:0006897">
    <property type="term" value="P:endocytosis"/>
    <property type="evidence" value="ECO:0000315"/>
    <property type="project" value="SGD"/>
</dbReference>
<dbReference type="GO" id="GO:0030071">
    <property type="term" value="P:regulation of mitotic metaphase/anaphase transition"/>
    <property type="evidence" value="ECO:0007669"/>
    <property type="project" value="InterPro"/>
</dbReference>
<dbReference type="GO" id="GO:0000920">
    <property type="term" value="P:septum digestion after cytokinesis"/>
    <property type="evidence" value="ECO:0000316"/>
    <property type="project" value="SGD"/>
</dbReference>
<dbReference type="FunFam" id="3.10.580.10:FF:000035">
    <property type="entry name" value="Protein SDS23"/>
    <property type="match status" value="1"/>
</dbReference>
<dbReference type="FunFam" id="3.10.580.10:FF:000043">
    <property type="entry name" value="Sds23p"/>
    <property type="match status" value="1"/>
</dbReference>
<dbReference type="Gene3D" id="3.10.580.10">
    <property type="entry name" value="CBS-domain"/>
    <property type="match status" value="2"/>
</dbReference>
<dbReference type="InterPro" id="IPR050511">
    <property type="entry name" value="AMPK_gamma/SDS23_families"/>
</dbReference>
<dbReference type="InterPro" id="IPR000644">
    <property type="entry name" value="CBS_dom"/>
</dbReference>
<dbReference type="InterPro" id="IPR046342">
    <property type="entry name" value="CBS_dom_sf"/>
</dbReference>
<dbReference type="InterPro" id="IPR016711">
    <property type="entry name" value="Ssd23"/>
</dbReference>
<dbReference type="PANTHER" id="PTHR13780">
    <property type="entry name" value="AMP-ACTIVATED PROTEIN KINASE, GAMMA REGULATORY SUBUNIT"/>
    <property type="match status" value="1"/>
</dbReference>
<dbReference type="PANTHER" id="PTHR13780:SF36">
    <property type="entry name" value="CBS DOMAIN-CONTAINING PROTEIN"/>
    <property type="match status" value="1"/>
</dbReference>
<dbReference type="Pfam" id="PF00571">
    <property type="entry name" value="CBS"/>
    <property type="match status" value="2"/>
</dbReference>
<dbReference type="PIRSF" id="PIRSF018148">
    <property type="entry name" value="UCP018148_CBS_YBR214w"/>
    <property type="match status" value="1"/>
</dbReference>
<dbReference type="SMART" id="SM00116">
    <property type="entry name" value="CBS"/>
    <property type="match status" value="4"/>
</dbReference>
<dbReference type="SUPFAM" id="SSF54631">
    <property type="entry name" value="CBS-domain pair"/>
    <property type="match status" value="2"/>
</dbReference>
<dbReference type="PROSITE" id="PS51371">
    <property type="entry name" value="CBS"/>
    <property type="match status" value="4"/>
</dbReference>
<gene>
    <name type="primary">SDS24</name>
    <name type="ordered locus">YBR214W</name>
    <name type="ORF">YBR1501</name>
</gene>
<name>SDS24_YEAST</name>
<comment type="function">
    <text evidence="5">Involved in DNA replication and cell separation during budding.</text>
</comment>
<comment type="subcellular location">
    <subcellularLocation>
        <location evidence="3">Cytoplasm</location>
    </subcellularLocation>
</comment>
<comment type="miscellaneous">
    <text evidence="4">Present with 2840 molecules/cell in log phase SD medium.</text>
</comment>
<comment type="similarity">
    <text evidence="6">Belongs to the SDS23 family.</text>
</comment>
<sequence length="527" mass="57187">MASTSNTFPPSQSNSSNNLPTSRHASIVEMLSTPPLLPHVQVNDTDDKEQPEESTPPTATAAAPGPGCAATPAPLRDEKPQFKLSAVPMTQTPSQCLSCVHAQKWQHIPLSQLIEQNKLIFVPGSISVEEAFNTLIKYHLNSIPVESFPGDMNCFTFDYNDLNSYLLLVLNKITVSNKQLTADCQNGKPVPVGEMVKLTPKNPFYKLPENESLSTVMGILGSGVHRVAITNEEMTKVKGILSQRRLIKYLWDNARSFTSLEPLLNSSLQDLHIGVLNIQSKPTSRQSRVISIQGEEPLIMGLYKMHVERISSIAVIDKQGNLLGNISVTDVKHVTRTSQYPLLHKTCRHFISVILNSRGLETGKDSFPIFHVYPSSSLARTLAKLVATKSHRLWIVQPPESSTSASSTNLTAANTAANAVSATAQSSANGATPMSKSSSSTSLNSHSPLMTAMEDPPSPRSSAIAIPPPSPASSTNTPNLFEKEYRTGKLIGVVSLTDIINLLARKQTGNKEVDPQSARRQRGSIAM</sequence>
<evidence type="ECO:0000255" key="1">
    <source>
        <dbReference type="PROSITE-ProRule" id="PRU00703"/>
    </source>
</evidence>
<evidence type="ECO:0000256" key="2">
    <source>
        <dbReference type="SAM" id="MobiDB-lite"/>
    </source>
</evidence>
<evidence type="ECO:0000269" key="3">
    <source>
    </source>
</evidence>
<evidence type="ECO:0000269" key="4">
    <source>
    </source>
</evidence>
<evidence type="ECO:0000269" key="5">
    <source>
    </source>
</evidence>
<evidence type="ECO:0000305" key="6"/>
<evidence type="ECO:0007744" key="7">
    <source>
    </source>
</evidence>
<evidence type="ECO:0007744" key="8">
    <source>
    </source>
</evidence>
<evidence type="ECO:0007744" key="9">
    <source>
    </source>
</evidence>
<evidence type="ECO:0007744" key="10">
    <source>
    </source>
</evidence>
<organism>
    <name type="scientific">Saccharomyces cerevisiae (strain ATCC 204508 / S288c)</name>
    <name type="common">Baker's yeast</name>
    <dbReference type="NCBI Taxonomy" id="559292"/>
    <lineage>
        <taxon>Eukaryota</taxon>
        <taxon>Fungi</taxon>
        <taxon>Dikarya</taxon>
        <taxon>Ascomycota</taxon>
        <taxon>Saccharomycotina</taxon>
        <taxon>Saccharomycetes</taxon>
        <taxon>Saccharomycetales</taxon>
        <taxon>Saccharomycetaceae</taxon>
        <taxon>Saccharomyces</taxon>
    </lineage>
</organism>
<proteinExistence type="evidence at protein level"/>
<keyword id="KW-0129">CBS domain</keyword>
<keyword id="KW-0963">Cytoplasm</keyword>
<keyword id="KW-0597">Phosphoprotein</keyword>
<keyword id="KW-1185">Reference proteome</keyword>
<keyword id="KW-0677">Repeat</keyword>
<feature type="chain" id="PRO_0000202512" description="Protein SDS24">
    <location>
        <begin position="1"/>
        <end position="527"/>
    </location>
</feature>
<feature type="domain" description="CBS 1" evidence="1">
    <location>
        <begin position="114"/>
        <end position="175"/>
    </location>
</feature>
<feature type="domain" description="CBS 2" evidence="1">
    <location>
        <begin position="198"/>
        <end position="256"/>
    </location>
</feature>
<feature type="domain" description="CBS 3" evidence="1">
    <location>
        <begin position="283"/>
        <end position="342"/>
    </location>
</feature>
<feature type="domain" description="CBS 4" evidence="1">
    <location>
        <begin position="443"/>
        <end position="512"/>
    </location>
</feature>
<feature type="region of interest" description="Disordered" evidence="2">
    <location>
        <begin position="1"/>
        <end position="75"/>
    </location>
</feature>
<feature type="region of interest" description="Disordered" evidence="2">
    <location>
        <begin position="424"/>
        <end position="478"/>
    </location>
</feature>
<feature type="region of interest" description="Disordered" evidence="2">
    <location>
        <begin position="508"/>
        <end position="527"/>
    </location>
</feature>
<feature type="compositionally biased region" description="Low complexity" evidence="2">
    <location>
        <begin position="1"/>
        <end position="22"/>
    </location>
</feature>
<feature type="compositionally biased region" description="Low complexity" evidence="2">
    <location>
        <begin position="55"/>
        <end position="74"/>
    </location>
</feature>
<feature type="compositionally biased region" description="Low complexity" evidence="2">
    <location>
        <begin position="424"/>
        <end position="447"/>
    </location>
</feature>
<feature type="modified residue" description="Phosphoserine" evidence="9 10">
    <location>
        <position position="94"/>
    </location>
</feature>
<feature type="modified residue" description="Phosphoserine" evidence="8 9 10">
    <location>
        <position position="458"/>
    </location>
</feature>
<feature type="modified residue" description="Phosphoserine" evidence="7 9">
    <location>
        <position position="524"/>
    </location>
</feature>
<reference key="1">
    <citation type="journal article" date="1994" name="EMBO J.">
        <title>Complete DNA sequence of yeast chromosome II.</title>
        <authorList>
            <person name="Feldmann H."/>
            <person name="Aigle M."/>
            <person name="Aljinovic G."/>
            <person name="Andre B."/>
            <person name="Baclet M.C."/>
            <person name="Barthe C."/>
            <person name="Baur A."/>
            <person name="Becam A.-M."/>
            <person name="Biteau N."/>
            <person name="Boles E."/>
            <person name="Brandt T."/>
            <person name="Brendel M."/>
            <person name="Brueckner M."/>
            <person name="Bussereau F."/>
            <person name="Christiansen C."/>
            <person name="Contreras R."/>
            <person name="Crouzet M."/>
            <person name="Cziepluch C."/>
            <person name="Demolis N."/>
            <person name="Delaveau T."/>
            <person name="Doignon F."/>
            <person name="Domdey H."/>
            <person name="Duesterhus S."/>
            <person name="Dubois E."/>
            <person name="Dujon B."/>
            <person name="El Bakkoury M."/>
            <person name="Entian K.-D."/>
            <person name="Feuermann M."/>
            <person name="Fiers W."/>
            <person name="Fobo G.M."/>
            <person name="Fritz C."/>
            <person name="Gassenhuber J."/>
            <person name="Glansdorff N."/>
            <person name="Goffeau A."/>
            <person name="Grivell L.A."/>
            <person name="de Haan M."/>
            <person name="Hein C."/>
            <person name="Herbert C.J."/>
            <person name="Hollenberg C.P."/>
            <person name="Holmstroem K."/>
            <person name="Jacq C."/>
            <person name="Jacquet M."/>
            <person name="Jauniaux J.-C."/>
            <person name="Jonniaux J.-L."/>
            <person name="Kallesoee T."/>
            <person name="Kiesau P."/>
            <person name="Kirchrath L."/>
            <person name="Koetter P."/>
            <person name="Korol S."/>
            <person name="Liebl S."/>
            <person name="Logghe M."/>
            <person name="Lohan A.J.E."/>
            <person name="Louis E.J."/>
            <person name="Li Z.Y."/>
            <person name="Maat M.J."/>
            <person name="Mallet L."/>
            <person name="Mannhaupt G."/>
            <person name="Messenguy F."/>
            <person name="Miosga T."/>
            <person name="Molemans F."/>
            <person name="Mueller S."/>
            <person name="Nasr F."/>
            <person name="Obermaier B."/>
            <person name="Perea J."/>
            <person name="Pierard A."/>
            <person name="Piravandi E."/>
            <person name="Pohl F.M."/>
            <person name="Pohl T.M."/>
            <person name="Potier S."/>
            <person name="Proft M."/>
            <person name="Purnelle B."/>
            <person name="Ramezani Rad M."/>
            <person name="Rieger M."/>
            <person name="Rose M."/>
            <person name="Schaaff-Gerstenschlaeger I."/>
            <person name="Scherens B."/>
            <person name="Schwarzlose C."/>
            <person name="Skala J."/>
            <person name="Slonimski P.P."/>
            <person name="Smits P.H.M."/>
            <person name="Souciet J.-L."/>
            <person name="Steensma H.Y."/>
            <person name="Stucka R."/>
            <person name="Urrestarazu L.A."/>
            <person name="van der Aart Q.J.M."/>
            <person name="Van Dyck L."/>
            <person name="Vassarotti A."/>
            <person name="Vetter I."/>
            <person name="Vierendeels F."/>
            <person name="Vissers S."/>
            <person name="Wagner G."/>
            <person name="de Wergifosse P."/>
            <person name="Wolfe K.H."/>
            <person name="Zagulski M."/>
            <person name="Zimmermann F.K."/>
            <person name="Mewes H.-W."/>
            <person name="Kleine K."/>
        </authorList>
    </citation>
    <scope>NUCLEOTIDE SEQUENCE [LARGE SCALE GENOMIC DNA]</scope>
    <source>
        <strain>ATCC 204508 / S288c</strain>
    </source>
</reference>
<reference key="2">
    <citation type="journal article" date="2014" name="G3 (Bethesda)">
        <title>The reference genome sequence of Saccharomyces cerevisiae: Then and now.</title>
        <authorList>
            <person name="Engel S.R."/>
            <person name="Dietrich F.S."/>
            <person name="Fisk D.G."/>
            <person name="Binkley G."/>
            <person name="Balakrishnan R."/>
            <person name="Costanzo M.C."/>
            <person name="Dwight S.S."/>
            <person name="Hitz B.C."/>
            <person name="Karra K."/>
            <person name="Nash R.S."/>
            <person name="Weng S."/>
            <person name="Wong E.D."/>
            <person name="Lloyd P."/>
            <person name="Skrzypek M.S."/>
            <person name="Miyasato S.R."/>
            <person name="Simison M."/>
            <person name="Cherry J.M."/>
        </authorList>
    </citation>
    <scope>GENOME REANNOTATION</scope>
    <source>
        <strain>ATCC 204508 / S288c</strain>
    </source>
</reference>
<reference key="3">
    <citation type="journal article" date="2003" name="Nature">
        <title>Global analysis of protein localization in budding yeast.</title>
        <authorList>
            <person name="Huh W.-K."/>
            <person name="Falvo J.V."/>
            <person name="Gerke L.C."/>
            <person name="Carroll A.S."/>
            <person name="Howson R.W."/>
            <person name="Weissman J.S."/>
            <person name="O'Shea E.K."/>
        </authorList>
    </citation>
    <scope>SUBCELLULAR LOCATION [LARGE SCALE ANALYSIS]</scope>
</reference>
<reference key="4">
    <citation type="journal article" date="2003" name="Nature">
        <title>Global analysis of protein expression in yeast.</title>
        <authorList>
            <person name="Ghaemmaghami S."/>
            <person name="Huh W.-K."/>
            <person name="Bower K."/>
            <person name="Howson R.W."/>
            <person name="Belle A."/>
            <person name="Dephoure N."/>
            <person name="O'Shea E.K."/>
            <person name="Weissman J.S."/>
        </authorList>
    </citation>
    <scope>LEVEL OF PROTEIN EXPRESSION [LARGE SCALE ANALYSIS]</scope>
</reference>
<reference key="5">
    <citation type="journal article" date="2005" name="Biosci. Biotechnol. Biochem.">
        <title>Functional conservation between fission yeast moc1/sds23 and its two orthologs, budding yeast SDS23 and SDS24, and phenotypic differences in their disruptants.</title>
        <authorList>
            <person name="Goldar M.M."/>
            <person name="Nishie T."/>
            <person name="Ishikura Y."/>
            <person name="Fukuda T."/>
            <person name="Takegawa K."/>
            <person name="Kawamukai M."/>
        </authorList>
    </citation>
    <scope>FUNCTION</scope>
</reference>
<reference key="6">
    <citation type="journal article" date="2007" name="J. Proteome Res.">
        <title>Large-scale phosphorylation analysis of alpha-factor-arrested Saccharomyces cerevisiae.</title>
        <authorList>
            <person name="Li X."/>
            <person name="Gerber S.A."/>
            <person name="Rudner A.D."/>
            <person name="Beausoleil S.A."/>
            <person name="Haas W."/>
            <person name="Villen J."/>
            <person name="Elias J.E."/>
            <person name="Gygi S.P."/>
        </authorList>
    </citation>
    <scope>PHOSPHORYLATION [LARGE SCALE ANALYSIS] AT SER-458</scope>
    <scope>IDENTIFICATION BY MASS SPECTROMETRY [LARGE SCALE ANALYSIS]</scope>
    <source>
        <strain>ADR376</strain>
    </source>
</reference>
<reference key="7">
    <citation type="journal article" date="2007" name="Proc. Natl. Acad. Sci. U.S.A.">
        <title>Analysis of phosphorylation sites on proteins from Saccharomyces cerevisiae by electron transfer dissociation (ETD) mass spectrometry.</title>
        <authorList>
            <person name="Chi A."/>
            <person name="Huttenhower C."/>
            <person name="Geer L.Y."/>
            <person name="Coon J.J."/>
            <person name="Syka J.E.P."/>
            <person name="Bai D.L."/>
            <person name="Shabanowitz J."/>
            <person name="Burke D.J."/>
            <person name="Troyanskaya O.G."/>
            <person name="Hunt D.F."/>
        </authorList>
    </citation>
    <scope>PHOSPHORYLATION [LARGE SCALE ANALYSIS] AT SER-524</scope>
    <scope>IDENTIFICATION BY MASS SPECTROMETRY [LARGE SCALE ANALYSIS]</scope>
</reference>
<reference key="8">
    <citation type="journal article" date="2008" name="Mol. Cell. Proteomics">
        <title>A multidimensional chromatography technology for in-depth phosphoproteome analysis.</title>
        <authorList>
            <person name="Albuquerque C.P."/>
            <person name="Smolka M.B."/>
            <person name="Payne S.H."/>
            <person name="Bafna V."/>
            <person name="Eng J."/>
            <person name="Zhou H."/>
        </authorList>
    </citation>
    <scope>PHOSPHORYLATION [LARGE SCALE ANALYSIS] AT SER-94; SER-458 AND SER-524</scope>
    <scope>IDENTIFICATION BY MASS SPECTROMETRY [LARGE SCALE ANALYSIS]</scope>
</reference>
<reference key="9">
    <citation type="journal article" date="2009" name="Science">
        <title>Global analysis of Cdk1 substrate phosphorylation sites provides insights into evolution.</title>
        <authorList>
            <person name="Holt L.J."/>
            <person name="Tuch B.B."/>
            <person name="Villen J."/>
            <person name="Johnson A.D."/>
            <person name="Gygi S.P."/>
            <person name="Morgan D.O."/>
        </authorList>
    </citation>
    <scope>PHOSPHORYLATION [LARGE SCALE ANALYSIS] AT SER-94 AND SER-458</scope>
    <scope>IDENTIFICATION BY MASS SPECTROMETRY [LARGE SCALE ANALYSIS]</scope>
</reference>
<accession>P38314</accession>
<accession>D6VQL0</accession>